<evidence type="ECO:0000255" key="1">
    <source>
        <dbReference type="HAMAP-Rule" id="MF_00051"/>
    </source>
</evidence>
<keyword id="KW-0028">Amino-acid biosynthesis</keyword>
<keyword id="KW-0963">Cytoplasm</keyword>
<keyword id="KW-0554">One-carbon metabolism</keyword>
<keyword id="KW-0663">Pyridoxal phosphate</keyword>
<keyword id="KW-1185">Reference proteome</keyword>
<keyword id="KW-0808">Transferase</keyword>
<dbReference type="EC" id="2.1.2.1" evidence="1"/>
<dbReference type="EMBL" id="CT978603">
    <property type="protein sequence ID" value="CAK29231.1"/>
    <property type="molecule type" value="Genomic_DNA"/>
</dbReference>
<dbReference type="SMR" id="A5GWH2"/>
<dbReference type="STRING" id="316278.SynRCC307_2328"/>
<dbReference type="KEGG" id="syr:SynRCC307_2328"/>
<dbReference type="eggNOG" id="COG0112">
    <property type="taxonomic scope" value="Bacteria"/>
</dbReference>
<dbReference type="HOGENOM" id="CLU_022477_2_1_3"/>
<dbReference type="UniPathway" id="UPA00193"/>
<dbReference type="UniPathway" id="UPA00288">
    <property type="reaction ID" value="UER01023"/>
</dbReference>
<dbReference type="Proteomes" id="UP000001115">
    <property type="component" value="Chromosome"/>
</dbReference>
<dbReference type="GO" id="GO:0005829">
    <property type="term" value="C:cytosol"/>
    <property type="evidence" value="ECO:0007669"/>
    <property type="project" value="TreeGrafter"/>
</dbReference>
<dbReference type="GO" id="GO:0004372">
    <property type="term" value="F:glycine hydroxymethyltransferase activity"/>
    <property type="evidence" value="ECO:0007669"/>
    <property type="project" value="UniProtKB-UniRule"/>
</dbReference>
<dbReference type="GO" id="GO:0030170">
    <property type="term" value="F:pyridoxal phosphate binding"/>
    <property type="evidence" value="ECO:0007669"/>
    <property type="project" value="UniProtKB-UniRule"/>
</dbReference>
<dbReference type="GO" id="GO:0019264">
    <property type="term" value="P:glycine biosynthetic process from serine"/>
    <property type="evidence" value="ECO:0007669"/>
    <property type="project" value="UniProtKB-UniRule"/>
</dbReference>
<dbReference type="GO" id="GO:0035999">
    <property type="term" value="P:tetrahydrofolate interconversion"/>
    <property type="evidence" value="ECO:0007669"/>
    <property type="project" value="UniProtKB-UniRule"/>
</dbReference>
<dbReference type="CDD" id="cd00378">
    <property type="entry name" value="SHMT"/>
    <property type="match status" value="1"/>
</dbReference>
<dbReference type="FunFam" id="3.40.640.10:FF:000001">
    <property type="entry name" value="Serine hydroxymethyltransferase"/>
    <property type="match status" value="1"/>
</dbReference>
<dbReference type="FunFam" id="3.90.1150.10:FF:000003">
    <property type="entry name" value="Serine hydroxymethyltransferase"/>
    <property type="match status" value="1"/>
</dbReference>
<dbReference type="Gene3D" id="3.90.1150.10">
    <property type="entry name" value="Aspartate Aminotransferase, domain 1"/>
    <property type="match status" value="1"/>
</dbReference>
<dbReference type="Gene3D" id="3.40.640.10">
    <property type="entry name" value="Type I PLP-dependent aspartate aminotransferase-like (Major domain)"/>
    <property type="match status" value="1"/>
</dbReference>
<dbReference type="HAMAP" id="MF_00051">
    <property type="entry name" value="SHMT"/>
    <property type="match status" value="1"/>
</dbReference>
<dbReference type="InterPro" id="IPR015424">
    <property type="entry name" value="PyrdxlP-dep_Trfase"/>
</dbReference>
<dbReference type="InterPro" id="IPR015421">
    <property type="entry name" value="PyrdxlP-dep_Trfase_major"/>
</dbReference>
<dbReference type="InterPro" id="IPR015422">
    <property type="entry name" value="PyrdxlP-dep_Trfase_small"/>
</dbReference>
<dbReference type="InterPro" id="IPR001085">
    <property type="entry name" value="Ser_HO-MeTrfase"/>
</dbReference>
<dbReference type="InterPro" id="IPR049943">
    <property type="entry name" value="Ser_HO-MeTrfase-like"/>
</dbReference>
<dbReference type="InterPro" id="IPR019798">
    <property type="entry name" value="Ser_HO-MeTrfase_PLP_BS"/>
</dbReference>
<dbReference type="InterPro" id="IPR039429">
    <property type="entry name" value="SHMT-like_dom"/>
</dbReference>
<dbReference type="NCBIfam" id="NF000586">
    <property type="entry name" value="PRK00011.1"/>
    <property type="match status" value="1"/>
</dbReference>
<dbReference type="PANTHER" id="PTHR11680">
    <property type="entry name" value="SERINE HYDROXYMETHYLTRANSFERASE"/>
    <property type="match status" value="1"/>
</dbReference>
<dbReference type="PANTHER" id="PTHR11680:SF35">
    <property type="entry name" value="SERINE HYDROXYMETHYLTRANSFERASE 1"/>
    <property type="match status" value="1"/>
</dbReference>
<dbReference type="Pfam" id="PF00464">
    <property type="entry name" value="SHMT"/>
    <property type="match status" value="1"/>
</dbReference>
<dbReference type="PIRSF" id="PIRSF000412">
    <property type="entry name" value="SHMT"/>
    <property type="match status" value="1"/>
</dbReference>
<dbReference type="SUPFAM" id="SSF53383">
    <property type="entry name" value="PLP-dependent transferases"/>
    <property type="match status" value="1"/>
</dbReference>
<dbReference type="PROSITE" id="PS00096">
    <property type="entry name" value="SHMT"/>
    <property type="match status" value="1"/>
</dbReference>
<comment type="function">
    <text evidence="1">Catalyzes the reversible interconversion of serine and glycine with tetrahydrofolate (THF) serving as the one-carbon carrier. This reaction serves as the major source of one-carbon groups required for the biosynthesis of purines, thymidylate, methionine, and other important biomolecules. Also exhibits THF-independent aldolase activity toward beta-hydroxyamino acids, producing glycine and aldehydes, via a retro-aldol mechanism.</text>
</comment>
<comment type="catalytic activity">
    <reaction evidence="1">
        <text>(6R)-5,10-methylene-5,6,7,8-tetrahydrofolate + glycine + H2O = (6S)-5,6,7,8-tetrahydrofolate + L-serine</text>
        <dbReference type="Rhea" id="RHEA:15481"/>
        <dbReference type="ChEBI" id="CHEBI:15377"/>
        <dbReference type="ChEBI" id="CHEBI:15636"/>
        <dbReference type="ChEBI" id="CHEBI:33384"/>
        <dbReference type="ChEBI" id="CHEBI:57305"/>
        <dbReference type="ChEBI" id="CHEBI:57453"/>
        <dbReference type="EC" id="2.1.2.1"/>
    </reaction>
</comment>
<comment type="cofactor">
    <cofactor evidence="1">
        <name>pyridoxal 5'-phosphate</name>
        <dbReference type="ChEBI" id="CHEBI:597326"/>
    </cofactor>
</comment>
<comment type="pathway">
    <text evidence="1">One-carbon metabolism; tetrahydrofolate interconversion.</text>
</comment>
<comment type="pathway">
    <text evidence="1">Amino-acid biosynthesis; glycine biosynthesis; glycine from L-serine: step 1/1.</text>
</comment>
<comment type="subunit">
    <text evidence="1">Homodimer.</text>
</comment>
<comment type="subcellular location">
    <subcellularLocation>
        <location evidence="1">Cytoplasm</location>
    </subcellularLocation>
</comment>
<comment type="similarity">
    <text evidence="1">Belongs to the SHMT family.</text>
</comment>
<reference key="1">
    <citation type="submission" date="2006-05" db="EMBL/GenBank/DDBJ databases">
        <authorList>
            <consortium name="Genoscope"/>
        </authorList>
    </citation>
    <scope>NUCLEOTIDE SEQUENCE [LARGE SCALE GENOMIC DNA]</scope>
    <source>
        <strain>RCC307</strain>
    </source>
</reference>
<gene>
    <name evidence="1" type="primary">glyA</name>
    <name type="ordered locus">SynRCC307_2328</name>
</gene>
<protein>
    <recommendedName>
        <fullName evidence="1">Serine hydroxymethyltransferase</fullName>
        <shortName evidence="1">SHMT</shortName>
        <shortName evidence="1">Serine methylase</shortName>
        <ecNumber evidence="1">2.1.2.1</ecNumber>
    </recommendedName>
</protein>
<name>GLYA_SYNR3</name>
<accession>A5GWH2</accession>
<sequence>MRSPQALLQGDPEIAGLINKELERQQSHLELIASENFASPAVMAAQGSVLTNKYAEGLPNRRYYGGCEHVDAIEELAIERAKQLFGAAWANVQPHSGAQANFAVFLALLKPGDTILGMDLSHGGHLTHGSPVNVSGKWFKAVHYGVDPETQQLNLESIRQLALEHKPKLIVCGYSAYPRSIDFAGFRAIADEVGAYLLADMAHIAGLVAAGVHPSPVPHCHVVTTTTHKTLRGPRGGLILCNDADFAKQFDKAVFPGTQGGPLEHVVAAKAVAFGEALQPSFKQYSQQVVANAQALAERLQERGIAVVSGGTDNHVVLLDLRGIGMTGKVADLLVSEVNITANKNTVPFDPESPFVTSGLRLGTAALTTRGFDEAAFSEVADVIADRLLNPEDAAIEQRCRDRVASLCQRHPLYGPASPVLAA</sequence>
<organism>
    <name type="scientific">Synechococcus sp. (strain RCC307)</name>
    <dbReference type="NCBI Taxonomy" id="316278"/>
    <lineage>
        <taxon>Bacteria</taxon>
        <taxon>Bacillati</taxon>
        <taxon>Cyanobacteriota</taxon>
        <taxon>Cyanophyceae</taxon>
        <taxon>Synechococcales</taxon>
        <taxon>Synechococcaceae</taxon>
        <taxon>Synechococcus</taxon>
    </lineage>
</organism>
<feature type="chain" id="PRO_1000091589" description="Serine hydroxymethyltransferase">
    <location>
        <begin position="1"/>
        <end position="423"/>
    </location>
</feature>
<feature type="binding site" evidence="1">
    <location>
        <position position="120"/>
    </location>
    <ligand>
        <name>(6S)-5,6,7,8-tetrahydrofolate</name>
        <dbReference type="ChEBI" id="CHEBI:57453"/>
    </ligand>
</feature>
<feature type="binding site" evidence="1">
    <location>
        <begin position="124"/>
        <end position="126"/>
    </location>
    <ligand>
        <name>(6S)-5,6,7,8-tetrahydrofolate</name>
        <dbReference type="ChEBI" id="CHEBI:57453"/>
    </ligand>
</feature>
<feature type="binding site" evidence="1">
    <location>
        <begin position="353"/>
        <end position="355"/>
    </location>
    <ligand>
        <name>(6S)-5,6,7,8-tetrahydrofolate</name>
        <dbReference type="ChEBI" id="CHEBI:57453"/>
    </ligand>
</feature>
<feature type="site" description="Plays an important role in substrate specificity" evidence="1">
    <location>
        <position position="228"/>
    </location>
</feature>
<feature type="modified residue" description="N6-(pyridoxal phosphate)lysine" evidence="1">
    <location>
        <position position="229"/>
    </location>
</feature>
<proteinExistence type="inferred from homology"/>